<proteinExistence type="inferred from homology"/>
<protein>
    <recommendedName>
        <fullName evidence="1">TATA-box-binding protein 3</fullName>
    </recommendedName>
    <alternativeName>
        <fullName evidence="1">Box A-binding protein 3</fullName>
        <shortName evidence="1">BAP 3</shortName>
    </alternativeName>
    <alternativeName>
        <fullName evidence="1">TATA sequence-binding protein 3</fullName>
        <shortName evidence="1">TBP 3</shortName>
    </alternativeName>
    <alternativeName>
        <fullName evidence="1">TATA-box factor 3</fullName>
    </alternativeName>
</protein>
<dbReference type="EMBL" id="AE008384">
    <property type="protein sequence ID" value="AAM31880.1"/>
    <property type="molecule type" value="Genomic_DNA"/>
</dbReference>
<dbReference type="RefSeq" id="WP_011034115.1">
    <property type="nucleotide sequence ID" value="NC_003901.1"/>
</dbReference>
<dbReference type="SMR" id="Q8PUZ4"/>
<dbReference type="IntAct" id="Q8PUZ4">
    <property type="interactions" value="1"/>
</dbReference>
<dbReference type="MINT" id="Q8PUZ4"/>
<dbReference type="KEGG" id="mma:MM_2184"/>
<dbReference type="PATRIC" id="fig|192952.21.peg.2501"/>
<dbReference type="eggNOG" id="arCOG01764">
    <property type="taxonomic scope" value="Archaea"/>
</dbReference>
<dbReference type="HOGENOM" id="CLU_060161_4_3_2"/>
<dbReference type="Proteomes" id="UP000000595">
    <property type="component" value="Chromosome"/>
</dbReference>
<dbReference type="GO" id="GO:0003677">
    <property type="term" value="F:DNA binding"/>
    <property type="evidence" value="ECO:0007669"/>
    <property type="project" value="UniProtKB-KW"/>
</dbReference>
<dbReference type="GO" id="GO:0003700">
    <property type="term" value="F:DNA-binding transcription factor activity"/>
    <property type="evidence" value="ECO:0007669"/>
    <property type="project" value="UniProtKB-UniRule"/>
</dbReference>
<dbReference type="GO" id="GO:0006352">
    <property type="term" value="P:DNA-templated transcription initiation"/>
    <property type="evidence" value="ECO:0007669"/>
    <property type="project" value="InterPro"/>
</dbReference>
<dbReference type="FunFam" id="3.30.310.10:FF:000007">
    <property type="entry name" value="TATA-box-binding protein"/>
    <property type="match status" value="1"/>
</dbReference>
<dbReference type="Gene3D" id="3.30.310.10">
    <property type="entry name" value="TATA-Binding Protein"/>
    <property type="match status" value="2"/>
</dbReference>
<dbReference type="HAMAP" id="MF_00408">
    <property type="entry name" value="TATA_bind_prot_arch"/>
    <property type="match status" value="1"/>
</dbReference>
<dbReference type="InterPro" id="IPR000814">
    <property type="entry name" value="TBP"/>
</dbReference>
<dbReference type="InterPro" id="IPR030491">
    <property type="entry name" value="TBP_CS"/>
</dbReference>
<dbReference type="InterPro" id="IPR012295">
    <property type="entry name" value="TBP_dom_sf"/>
</dbReference>
<dbReference type="NCBIfam" id="NF001593">
    <property type="entry name" value="PRK00394.1-2"/>
    <property type="match status" value="1"/>
</dbReference>
<dbReference type="NCBIfam" id="NF001599">
    <property type="entry name" value="PRK00394.2-4"/>
    <property type="match status" value="1"/>
</dbReference>
<dbReference type="PANTHER" id="PTHR10126">
    <property type="entry name" value="TATA-BOX BINDING PROTEIN"/>
    <property type="match status" value="1"/>
</dbReference>
<dbReference type="Pfam" id="PF00352">
    <property type="entry name" value="TBP"/>
    <property type="match status" value="2"/>
</dbReference>
<dbReference type="PRINTS" id="PR00686">
    <property type="entry name" value="TIFACTORIID"/>
</dbReference>
<dbReference type="SUPFAM" id="SSF55945">
    <property type="entry name" value="TATA-box binding protein-like"/>
    <property type="match status" value="2"/>
</dbReference>
<dbReference type="PROSITE" id="PS00351">
    <property type="entry name" value="TFIID"/>
    <property type="match status" value="1"/>
</dbReference>
<organism>
    <name type="scientific">Methanosarcina mazei (strain ATCC BAA-159 / DSM 3647 / Goe1 / Go1 / JCM 11833 / OCM 88)</name>
    <name type="common">Methanosarcina frisia</name>
    <dbReference type="NCBI Taxonomy" id="192952"/>
    <lineage>
        <taxon>Archaea</taxon>
        <taxon>Methanobacteriati</taxon>
        <taxon>Methanobacteriota</taxon>
        <taxon>Stenosarchaea group</taxon>
        <taxon>Methanomicrobia</taxon>
        <taxon>Methanosarcinales</taxon>
        <taxon>Methanosarcinaceae</taxon>
        <taxon>Methanosarcina</taxon>
    </lineage>
</organism>
<comment type="function">
    <text evidence="1">General factor that plays a role in the activation of archaeal genes transcribed by RNA polymerase. Binds specifically to the TATA box promoter element which lies close to the position of transcription initiation.</text>
</comment>
<comment type="similarity">
    <text evidence="1">Belongs to the TBP family.</text>
</comment>
<sequence length="185" mass="20176">MESTITIENVVASTRLAEDFDLEKMMESGLEGAEYNKVKFPGLVYRINNPKAAFLIFTSGKVVCTGSKSIGNAHAAIINLANTLKSICCEKIDLEPDVRVQNIVASADLKTNLNLNTIAIAFGLENVEYEPEVFPGLIYRVEAPKVVVLVFSSGKLVITGGKCPEDCEEGLRIVKTEFDNLGLLY</sequence>
<accession>Q8PUZ4</accession>
<keyword id="KW-0238">DNA-binding</keyword>
<keyword id="KW-0677">Repeat</keyword>
<keyword id="KW-0804">Transcription</keyword>
<keyword id="KW-0805">Transcription regulation</keyword>
<feature type="chain" id="PRO_0000154012" description="TATA-box-binding protein 3">
    <location>
        <begin position="1"/>
        <end position="185"/>
    </location>
</feature>
<feature type="repeat" description="1">
    <location>
        <begin position="7"/>
        <end position="84"/>
    </location>
</feature>
<feature type="repeat" description="2">
    <location>
        <begin position="100"/>
        <end position="178"/>
    </location>
</feature>
<evidence type="ECO:0000255" key="1">
    <source>
        <dbReference type="HAMAP-Rule" id="MF_00408"/>
    </source>
</evidence>
<name>TBP3_METMA</name>
<gene>
    <name evidence="1" type="primary">tbp3</name>
    <name type="ordered locus">MM_2184</name>
</gene>
<reference key="1">
    <citation type="journal article" date="2002" name="J. Mol. Microbiol. Biotechnol.">
        <title>The genome of Methanosarcina mazei: evidence for lateral gene transfer between Bacteria and Archaea.</title>
        <authorList>
            <person name="Deppenmeier U."/>
            <person name="Johann A."/>
            <person name="Hartsch T."/>
            <person name="Merkl R."/>
            <person name="Schmitz R.A."/>
            <person name="Martinez-Arias R."/>
            <person name="Henne A."/>
            <person name="Wiezer A."/>
            <person name="Baeumer S."/>
            <person name="Jacobi C."/>
            <person name="Brueggemann H."/>
            <person name="Lienard T."/>
            <person name="Christmann A."/>
            <person name="Boemecke M."/>
            <person name="Steckel S."/>
            <person name="Bhattacharyya A."/>
            <person name="Lykidis A."/>
            <person name="Overbeek R."/>
            <person name="Klenk H.-P."/>
            <person name="Gunsalus R.P."/>
            <person name="Fritz H.-J."/>
            <person name="Gottschalk G."/>
        </authorList>
    </citation>
    <scope>NUCLEOTIDE SEQUENCE [LARGE SCALE GENOMIC DNA]</scope>
    <source>
        <strain>ATCC BAA-159 / DSM 3647 / Goe1 / Go1 / JCM 11833 / OCM 88</strain>
    </source>
</reference>